<organism>
    <name type="scientific">Anaeromyxobacter dehalogenans (strain 2CP-C)</name>
    <dbReference type="NCBI Taxonomy" id="290397"/>
    <lineage>
        <taxon>Bacteria</taxon>
        <taxon>Pseudomonadati</taxon>
        <taxon>Myxococcota</taxon>
        <taxon>Myxococcia</taxon>
        <taxon>Myxococcales</taxon>
        <taxon>Cystobacterineae</taxon>
        <taxon>Anaeromyxobacteraceae</taxon>
        <taxon>Anaeromyxobacter</taxon>
    </lineage>
</organism>
<dbReference type="EC" id="1.1.1.103" evidence="1"/>
<dbReference type="EMBL" id="CP000251">
    <property type="protein sequence ID" value="ABC81865.1"/>
    <property type="molecule type" value="Genomic_DNA"/>
</dbReference>
<dbReference type="RefSeq" id="WP_011421147.1">
    <property type="nucleotide sequence ID" value="NC_007760.1"/>
</dbReference>
<dbReference type="SMR" id="Q2IJN4"/>
<dbReference type="STRING" id="290397.Adeh_2095"/>
<dbReference type="KEGG" id="ade:Adeh_2095"/>
<dbReference type="eggNOG" id="COG1063">
    <property type="taxonomic scope" value="Bacteria"/>
</dbReference>
<dbReference type="HOGENOM" id="CLU_026673_11_0_7"/>
<dbReference type="OrthoDB" id="5484143at2"/>
<dbReference type="UniPathway" id="UPA00046">
    <property type="reaction ID" value="UER00505"/>
</dbReference>
<dbReference type="Proteomes" id="UP000001935">
    <property type="component" value="Chromosome"/>
</dbReference>
<dbReference type="GO" id="GO:0005737">
    <property type="term" value="C:cytoplasm"/>
    <property type="evidence" value="ECO:0007669"/>
    <property type="project" value="UniProtKB-SubCell"/>
</dbReference>
<dbReference type="GO" id="GO:0008743">
    <property type="term" value="F:L-threonine 3-dehydrogenase activity"/>
    <property type="evidence" value="ECO:0007669"/>
    <property type="project" value="UniProtKB-UniRule"/>
</dbReference>
<dbReference type="GO" id="GO:0008270">
    <property type="term" value="F:zinc ion binding"/>
    <property type="evidence" value="ECO:0007669"/>
    <property type="project" value="UniProtKB-UniRule"/>
</dbReference>
<dbReference type="GO" id="GO:0019518">
    <property type="term" value="P:L-threonine catabolic process to glycine"/>
    <property type="evidence" value="ECO:0007669"/>
    <property type="project" value="UniProtKB-UniPathway"/>
</dbReference>
<dbReference type="Gene3D" id="3.90.180.10">
    <property type="entry name" value="Medium-chain alcohol dehydrogenases, catalytic domain"/>
    <property type="match status" value="1"/>
</dbReference>
<dbReference type="Gene3D" id="3.40.50.720">
    <property type="entry name" value="NAD(P)-binding Rossmann-like Domain"/>
    <property type="match status" value="1"/>
</dbReference>
<dbReference type="HAMAP" id="MF_00627">
    <property type="entry name" value="Thr_dehydrog"/>
    <property type="match status" value="1"/>
</dbReference>
<dbReference type="InterPro" id="IPR013149">
    <property type="entry name" value="ADH-like_C"/>
</dbReference>
<dbReference type="InterPro" id="IPR013154">
    <property type="entry name" value="ADH-like_N"/>
</dbReference>
<dbReference type="InterPro" id="IPR002328">
    <property type="entry name" value="ADH_Zn_CS"/>
</dbReference>
<dbReference type="InterPro" id="IPR011032">
    <property type="entry name" value="GroES-like_sf"/>
</dbReference>
<dbReference type="InterPro" id="IPR004627">
    <property type="entry name" value="L-Threonine_3-DHase"/>
</dbReference>
<dbReference type="InterPro" id="IPR036291">
    <property type="entry name" value="NAD(P)-bd_dom_sf"/>
</dbReference>
<dbReference type="InterPro" id="IPR020843">
    <property type="entry name" value="PKS_ER"/>
</dbReference>
<dbReference type="InterPro" id="IPR050129">
    <property type="entry name" value="Zn_alcohol_dh"/>
</dbReference>
<dbReference type="NCBIfam" id="NF003808">
    <property type="entry name" value="PRK05396.1"/>
    <property type="match status" value="1"/>
</dbReference>
<dbReference type="NCBIfam" id="TIGR00692">
    <property type="entry name" value="tdh"/>
    <property type="match status" value="1"/>
</dbReference>
<dbReference type="PANTHER" id="PTHR43401">
    <property type="entry name" value="L-THREONINE 3-DEHYDROGENASE"/>
    <property type="match status" value="1"/>
</dbReference>
<dbReference type="PANTHER" id="PTHR43401:SF2">
    <property type="entry name" value="L-THREONINE 3-DEHYDROGENASE"/>
    <property type="match status" value="1"/>
</dbReference>
<dbReference type="Pfam" id="PF08240">
    <property type="entry name" value="ADH_N"/>
    <property type="match status" value="1"/>
</dbReference>
<dbReference type="Pfam" id="PF00107">
    <property type="entry name" value="ADH_zinc_N"/>
    <property type="match status" value="1"/>
</dbReference>
<dbReference type="SMART" id="SM00829">
    <property type="entry name" value="PKS_ER"/>
    <property type="match status" value="1"/>
</dbReference>
<dbReference type="SUPFAM" id="SSF50129">
    <property type="entry name" value="GroES-like"/>
    <property type="match status" value="1"/>
</dbReference>
<dbReference type="SUPFAM" id="SSF51735">
    <property type="entry name" value="NAD(P)-binding Rossmann-fold domains"/>
    <property type="match status" value="1"/>
</dbReference>
<dbReference type="PROSITE" id="PS00059">
    <property type="entry name" value="ADH_ZINC"/>
    <property type="match status" value="1"/>
</dbReference>
<sequence length="345" mass="38025">MKALVKAKREEGIWMQHDVPVPEVGVHDVMIRVTKSAICGTDVHIYNWDEWSQKTVPVPMVVGHEYVGRVERVGAEVEAFRPGERVSGEGHVTCGFCRNCRAGRRHLCRHTVGVGVNRPGSFAEYVVIPADNVYRIPDDIPDDIAAIFDPFGNATHTALSFDLVGEDVLVTGAGPIGVMAAAIARHVGARHVVVTDVNDYRLDLARRMGASRAVNVAREDLRAVMSELGMREGFDVGLEMSGNGRAFRQLLEVMNHGGRIALLGIMPGPEPIDWSQVVFKGLQLKGVYGREMYETWYKMVAMLQSGLDLSAVVTHRFSIDDFQQGFDVMRSGRSGKVVLDWGVAR</sequence>
<protein>
    <recommendedName>
        <fullName evidence="1">L-threonine 3-dehydrogenase</fullName>
        <shortName evidence="1">TDH</shortName>
        <ecNumber evidence="1">1.1.1.103</ecNumber>
    </recommendedName>
</protein>
<comment type="function">
    <text evidence="1">Catalyzes the NAD(+)-dependent oxidation of L-threonine to 2-amino-3-ketobutyrate.</text>
</comment>
<comment type="catalytic activity">
    <reaction evidence="1">
        <text>L-threonine + NAD(+) = (2S)-2-amino-3-oxobutanoate + NADH + H(+)</text>
        <dbReference type="Rhea" id="RHEA:13161"/>
        <dbReference type="ChEBI" id="CHEBI:15378"/>
        <dbReference type="ChEBI" id="CHEBI:57540"/>
        <dbReference type="ChEBI" id="CHEBI:57926"/>
        <dbReference type="ChEBI" id="CHEBI:57945"/>
        <dbReference type="ChEBI" id="CHEBI:78948"/>
        <dbReference type="EC" id="1.1.1.103"/>
    </reaction>
</comment>
<comment type="cofactor">
    <cofactor evidence="1">
        <name>Zn(2+)</name>
        <dbReference type="ChEBI" id="CHEBI:29105"/>
    </cofactor>
    <text evidence="1">Binds 2 Zn(2+) ions per subunit.</text>
</comment>
<comment type="pathway">
    <text evidence="1">Amino-acid degradation; L-threonine degradation via oxydo-reductase pathway; glycine from L-threonine: step 1/2.</text>
</comment>
<comment type="subunit">
    <text evidence="1">Homotetramer.</text>
</comment>
<comment type="subcellular location">
    <subcellularLocation>
        <location evidence="1">Cytoplasm</location>
    </subcellularLocation>
</comment>
<comment type="similarity">
    <text evidence="1">Belongs to the zinc-containing alcohol dehydrogenase family.</text>
</comment>
<gene>
    <name evidence="1" type="primary">tdh</name>
    <name type="ordered locus">Adeh_2095</name>
</gene>
<keyword id="KW-0963">Cytoplasm</keyword>
<keyword id="KW-0479">Metal-binding</keyword>
<keyword id="KW-0520">NAD</keyword>
<keyword id="KW-0560">Oxidoreductase</keyword>
<keyword id="KW-1185">Reference proteome</keyword>
<keyword id="KW-0862">Zinc</keyword>
<proteinExistence type="inferred from homology"/>
<name>TDH_ANADE</name>
<feature type="chain" id="PRO_1000051614" description="L-threonine 3-dehydrogenase">
    <location>
        <begin position="1"/>
        <end position="345"/>
    </location>
</feature>
<feature type="active site" description="Charge relay system" evidence="1">
    <location>
        <position position="41"/>
    </location>
</feature>
<feature type="active site" description="Charge relay system" evidence="1">
    <location>
        <position position="44"/>
    </location>
</feature>
<feature type="binding site" evidence="1">
    <location>
        <position position="39"/>
    </location>
    <ligand>
        <name>Zn(2+)</name>
        <dbReference type="ChEBI" id="CHEBI:29105"/>
        <label>1</label>
        <note>catalytic</note>
    </ligand>
</feature>
<feature type="binding site" evidence="1">
    <location>
        <position position="64"/>
    </location>
    <ligand>
        <name>Zn(2+)</name>
        <dbReference type="ChEBI" id="CHEBI:29105"/>
        <label>1</label>
        <note>catalytic</note>
    </ligand>
</feature>
<feature type="binding site" evidence="1">
    <location>
        <position position="65"/>
    </location>
    <ligand>
        <name>Zn(2+)</name>
        <dbReference type="ChEBI" id="CHEBI:29105"/>
        <label>1</label>
        <note>catalytic</note>
    </ligand>
</feature>
<feature type="binding site" evidence="1">
    <location>
        <position position="94"/>
    </location>
    <ligand>
        <name>Zn(2+)</name>
        <dbReference type="ChEBI" id="CHEBI:29105"/>
        <label>2</label>
    </ligand>
</feature>
<feature type="binding site" evidence="1">
    <location>
        <position position="97"/>
    </location>
    <ligand>
        <name>Zn(2+)</name>
        <dbReference type="ChEBI" id="CHEBI:29105"/>
        <label>2</label>
    </ligand>
</feature>
<feature type="binding site" evidence="1">
    <location>
        <position position="100"/>
    </location>
    <ligand>
        <name>Zn(2+)</name>
        <dbReference type="ChEBI" id="CHEBI:29105"/>
        <label>2</label>
    </ligand>
</feature>
<feature type="binding site" evidence="1">
    <location>
        <position position="108"/>
    </location>
    <ligand>
        <name>Zn(2+)</name>
        <dbReference type="ChEBI" id="CHEBI:29105"/>
        <label>2</label>
    </ligand>
</feature>
<feature type="binding site" evidence="1">
    <location>
        <position position="176"/>
    </location>
    <ligand>
        <name>NAD(+)</name>
        <dbReference type="ChEBI" id="CHEBI:57540"/>
    </ligand>
</feature>
<feature type="binding site" evidence="1">
    <location>
        <position position="196"/>
    </location>
    <ligand>
        <name>NAD(+)</name>
        <dbReference type="ChEBI" id="CHEBI:57540"/>
    </ligand>
</feature>
<feature type="binding site" evidence="1">
    <location>
        <position position="201"/>
    </location>
    <ligand>
        <name>NAD(+)</name>
        <dbReference type="ChEBI" id="CHEBI:57540"/>
    </ligand>
</feature>
<feature type="binding site" evidence="1">
    <location>
        <begin position="263"/>
        <end position="265"/>
    </location>
    <ligand>
        <name>NAD(+)</name>
        <dbReference type="ChEBI" id="CHEBI:57540"/>
    </ligand>
</feature>
<feature type="binding site" evidence="1">
    <location>
        <begin position="287"/>
        <end position="288"/>
    </location>
    <ligand>
        <name>NAD(+)</name>
        <dbReference type="ChEBI" id="CHEBI:57540"/>
    </ligand>
</feature>
<feature type="site" description="Important for catalytic activity for the proton relay mechanism but does not participate directly in the coordination of zinc atom" evidence="1">
    <location>
        <position position="149"/>
    </location>
</feature>
<accession>Q2IJN4</accession>
<evidence type="ECO:0000255" key="1">
    <source>
        <dbReference type="HAMAP-Rule" id="MF_00627"/>
    </source>
</evidence>
<reference key="1">
    <citation type="submission" date="2006-01" db="EMBL/GenBank/DDBJ databases">
        <title>Complete sequence of Anaeromyxobacter dehalogenans 2CP-C.</title>
        <authorList>
            <person name="Copeland A."/>
            <person name="Lucas S."/>
            <person name="Lapidus A."/>
            <person name="Barry K."/>
            <person name="Detter J.C."/>
            <person name="Glavina T."/>
            <person name="Hammon N."/>
            <person name="Israni S."/>
            <person name="Pitluck S."/>
            <person name="Brettin T."/>
            <person name="Bruce D."/>
            <person name="Han C."/>
            <person name="Tapia R."/>
            <person name="Gilna P."/>
            <person name="Kiss H."/>
            <person name="Schmutz J."/>
            <person name="Larimer F."/>
            <person name="Land M."/>
            <person name="Kyrpides N."/>
            <person name="Anderson I."/>
            <person name="Sanford R.A."/>
            <person name="Ritalahti K.M."/>
            <person name="Thomas H.S."/>
            <person name="Kirby J.R."/>
            <person name="Zhulin I.B."/>
            <person name="Loeffler F.E."/>
            <person name="Richardson P."/>
        </authorList>
    </citation>
    <scope>NUCLEOTIDE SEQUENCE [LARGE SCALE GENOMIC DNA]</scope>
    <source>
        <strain>2CP-C</strain>
    </source>
</reference>